<proteinExistence type="inferred from homology"/>
<gene>
    <name evidence="1" type="primary">ilvC</name>
    <name type="ordered locus">BURPS1106A_1283</name>
</gene>
<protein>
    <recommendedName>
        <fullName evidence="1">Ketol-acid reductoisomerase (NADP(+))</fullName>
        <shortName evidence="1">KARI</shortName>
        <ecNumber evidence="1">1.1.1.86</ecNumber>
    </recommendedName>
    <alternativeName>
        <fullName evidence="1">Acetohydroxy-acid isomeroreductase</fullName>
        <shortName evidence="1">AHIR</shortName>
    </alternativeName>
    <alternativeName>
        <fullName evidence="1">Alpha-keto-beta-hydroxylacyl reductoisomerase</fullName>
    </alternativeName>
    <alternativeName>
        <fullName evidence="1">Ketol-acid reductoisomerase type 1</fullName>
    </alternativeName>
    <alternativeName>
        <fullName evidence="1">Ketol-acid reductoisomerase type I</fullName>
    </alternativeName>
</protein>
<keyword id="KW-0028">Amino-acid biosynthesis</keyword>
<keyword id="KW-0100">Branched-chain amino acid biosynthesis</keyword>
<keyword id="KW-0460">Magnesium</keyword>
<keyword id="KW-0479">Metal-binding</keyword>
<keyword id="KW-0521">NADP</keyword>
<keyword id="KW-0560">Oxidoreductase</keyword>
<evidence type="ECO:0000255" key="1">
    <source>
        <dbReference type="HAMAP-Rule" id="MF_00435"/>
    </source>
</evidence>
<evidence type="ECO:0000255" key="2">
    <source>
        <dbReference type="PROSITE-ProRule" id="PRU01197"/>
    </source>
</evidence>
<evidence type="ECO:0000255" key="3">
    <source>
        <dbReference type="PROSITE-ProRule" id="PRU01198"/>
    </source>
</evidence>
<dbReference type="EC" id="1.1.1.86" evidence="1"/>
<dbReference type="EMBL" id="CP000572">
    <property type="protein sequence ID" value="ABN90965.1"/>
    <property type="molecule type" value="Genomic_DNA"/>
</dbReference>
<dbReference type="RefSeq" id="WP_004185539.1">
    <property type="nucleotide sequence ID" value="NC_009076.1"/>
</dbReference>
<dbReference type="SMR" id="A3NT91"/>
<dbReference type="GeneID" id="93059680"/>
<dbReference type="KEGG" id="bpl:BURPS1106A_1283"/>
<dbReference type="HOGENOM" id="CLU_033821_0_1_4"/>
<dbReference type="UniPathway" id="UPA00047">
    <property type="reaction ID" value="UER00056"/>
</dbReference>
<dbReference type="UniPathway" id="UPA00049">
    <property type="reaction ID" value="UER00060"/>
</dbReference>
<dbReference type="Proteomes" id="UP000006738">
    <property type="component" value="Chromosome I"/>
</dbReference>
<dbReference type="GO" id="GO:0005829">
    <property type="term" value="C:cytosol"/>
    <property type="evidence" value="ECO:0007669"/>
    <property type="project" value="TreeGrafter"/>
</dbReference>
<dbReference type="GO" id="GO:0004455">
    <property type="term" value="F:ketol-acid reductoisomerase activity"/>
    <property type="evidence" value="ECO:0007669"/>
    <property type="project" value="UniProtKB-UniRule"/>
</dbReference>
<dbReference type="GO" id="GO:0000287">
    <property type="term" value="F:magnesium ion binding"/>
    <property type="evidence" value="ECO:0007669"/>
    <property type="project" value="UniProtKB-UniRule"/>
</dbReference>
<dbReference type="GO" id="GO:0050661">
    <property type="term" value="F:NADP binding"/>
    <property type="evidence" value="ECO:0007669"/>
    <property type="project" value="InterPro"/>
</dbReference>
<dbReference type="GO" id="GO:0009097">
    <property type="term" value="P:isoleucine biosynthetic process"/>
    <property type="evidence" value="ECO:0007669"/>
    <property type="project" value="UniProtKB-UniRule"/>
</dbReference>
<dbReference type="GO" id="GO:0009099">
    <property type="term" value="P:L-valine biosynthetic process"/>
    <property type="evidence" value="ECO:0007669"/>
    <property type="project" value="UniProtKB-UniRule"/>
</dbReference>
<dbReference type="FunFam" id="3.40.50.720:FF:000023">
    <property type="entry name" value="Ketol-acid reductoisomerase (NADP(+))"/>
    <property type="match status" value="1"/>
</dbReference>
<dbReference type="Gene3D" id="6.10.240.10">
    <property type="match status" value="1"/>
</dbReference>
<dbReference type="Gene3D" id="3.40.50.720">
    <property type="entry name" value="NAD(P)-binding Rossmann-like Domain"/>
    <property type="match status" value="1"/>
</dbReference>
<dbReference type="HAMAP" id="MF_00435">
    <property type="entry name" value="IlvC"/>
    <property type="match status" value="1"/>
</dbReference>
<dbReference type="InterPro" id="IPR008927">
    <property type="entry name" value="6-PGluconate_DH-like_C_sf"/>
</dbReference>
<dbReference type="InterPro" id="IPR013023">
    <property type="entry name" value="KARI"/>
</dbReference>
<dbReference type="InterPro" id="IPR000506">
    <property type="entry name" value="KARI_C"/>
</dbReference>
<dbReference type="InterPro" id="IPR013116">
    <property type="entry name" value="KARI_N"/>
</dbReference>
<dbReference type="InterPro" id="IPR014359">
    <property type="entry name" value="KARI_prok"/>
</dbReference>
<dbReference type="InterPro" id="IPR036291">
    <property type="entry name" value="NAD(P)-bd_dom_sf"/>
</dbReference>
<dbReference type="NCBIfam" id="TIGR00465">
    <property type="entry name" value="ilvC"/>
    <property type="match status" value="1"/>
</dbReference>
<dbReference type="NCBIfam" id="NF004017">
    <property type="entry name" value="PRK05479.1"/>
    <property type="match status" value="1"/>
</dbReference>
<dbReference type="NCBIfam" id="NF009940">
    <property type="entry name" value="PRK13403.1"/>
    <property type="match status" value="1"/>
</dbReference>
<dbReference type="PANTHER" id="PTHR21371">
    <property type="entry name" value="KETOL-ACID REDUCTOISOMERASE, MITOCHONDRIAL"/>
    <property type="match status" value="1"/>
</dbReference>
<dbReference type="PANTHER" id="PTHR21371:SF1">
    <property type="entry name" value="KETOL-ACID REDUCTOISOMERASE, MITOCHONDRIAL"/>
    <property type="match status" value="1"/>
</dbReference>
<dbReference type="Pfam" id="PF01450">
    <property type="entry name" value="KARI_C"/>
    <property type="match status" value="1"/>
</dbReference>
<dbReference type="Pfam" id="PF07991">
    <property type="entry name" value="KARI_N"/>
    <property type="match status" value="1"/>
</dbReference>
<dbReference type="PIRSF" id="PIRSF000116">
    <property type="entry name" value="IlvC_gammaproteo"/>
    <property type="match status" value="1"/>
</dbReference>
<dbReference type="SUPFAM" id="SSF48179">
    <property type="entry name" value="6-phosphogluconate dehydrogenase C-terminal domain-like"/>
    <property type="match status" value="1"/>
</dbReference>
<dbReference type="SUPFAM" id="SSF51735">
    <property type="entry name" value="NAD(P)-binding Rossmann-fold domains"/>
    <property type="match status" value="1"/>
</dbReference>
<dbReference type="PROSITE" id="PS51851">
    <property type="entry name" value="KARI_C"/>
    <property type="match status" value="1"/>
</dbReference>
<dbReference type="PROSITE" id="PS51850">
    <property type="entry name" value="KARI_N"/>
    <property type="match status" value="1"/>
</dbReference>
<reference key="1">
    <citation type="journal article" date="2010" name="Genome Biol. Evol.">
        <title>Continuing evolution of Burkholderia mallei through genome reduction and large-scale rearrangements.</title>
        <authorList>
            <person name="Losada L."/>
            <person name="Ronning C.M."/>
            <person name="DeShazer D."/>
            <person name="Woods D."/>
            <person name="Fedorova N."/>
            <person name="Kim H.S."/>
            <person name="Shabalina S.A."/>
            <person name="Pearson T.R."/>
            <person name="Brinkac L."/>
            <person name="Tan P."/>
            <person name="Nandi T."/>
            <person name="Crabtree J."/>
            <person name="Badger J."/>
            <person name="Beckstrom-Sternberg S."/>
            <person name="Saqib M."/>
            <person name="Schutzer S.E."/>
            <person name="Keim P."/>
            <person name="Nierman W.C."/>
        </authorList>
    </citation>
    <scope>NUCLEOTIDE SEQUENCE [LARGE SCALE GENOMIC DNA]</scope>
    <source>
        <strain>1106a</strain>
    </source>
</reference>
<sequence length="338" mass="36267">MKVFYDKDADLSLIKGKQVTIIGYGSQGHAHALNLKDSGVNVTVGLRRGGASWSKAENAGLAVKEVAEAVKGADVVMMLLPDEQIAAVYAQEVHANIKEGAALAFAHGFNVHYGQVIPRADLDVIMVAPKAPGHTVRGTYAQGGGVPHLIAVAQDKSGAARDIALSYAAANGGGRAGIIETNFREETETDLFGEQAVLCGGTVELIKAGFETLVEAGYAPEMAYFECLHELKLIVDLIYEGGIANMNYSISNNAEYGEYVTGPRVVTEETKKAMKQCLTDIQTGEYAKSFILENKAGAPTLQSRRRLTAEHQIEQVGSKLRAMMPWIAKNKLVDQSKN</sequence>
<organism>
    <name type="scientific">Burkholderia pseudomallei (strain 1106a)</name>
    <dbReference type="NCBI Taxonomy" id="357348"/>
    <lineage>
        <taxon>Bacteria</taxon>
        <taxon>Pseudomonadati</taxon>
        <taxon>Pseudomonadota</taxon>
        <taxon>Betaproteobacteria</taxon>
        <taxon>Burkholderiales</taxon>
        <taxon>Burkholderiaceae</taxon>
        <taxon>Burkholderia</taxon>
        <taxon>pseudomallei group</taxon>
    </lineage>
</organism>
<accession>A3NT91</accession>
<name>ILVC_BURP0</name>
<comment type="function">
    <text evidence="1">Involved in the biosynthesis of branched-chain amino acids (BCAA). Catalyzes an alkyl-migration followed by a ketol-acid reduction of (S)-2-acetolactate (S2AL) to yield (R)-2,3-dihydroxy-isovalerate. In the isomerase reaction, S2AL is rearranged via a Mg-dependent methyl migration to produce 3-hydroxy-3-methyl-2-ketobutyrate (HMKB). In the reductase reaction, this 2-ketoacid undergoes a metal-dependent reduction by NADPH to yield (R)-2,3-dihydroxy-isovalerate.</text>
</comment>
<comment type="catalytic activity">
    <reaction evidence="1">
        <text>(2R)-2,3-dihydroxy-3-methylbutanoate + NADP(+) = (2S)-2-acetolactate + NADPH + H(+)</text>
        <dbReference type="Rhea" id="RHEA:22068"/>
        <dbReference type="ChEBI" id="CHEBI:15378"/>
        <dbReference type="ChEBI" id="CHEBI:49072"/>
        <dbReference type="ChEBI" id="CHEBI:57783"/>
        <dbReference type="ChEBI" id="CHEBI:58349"/>
        <dbReference type="ChEBI" id="CHEBI:58476"/>
        <dbReference type="EC" id="1.1.1.86"/>
    </reaction>
</comment>
<comment type="catalytic activity">
    <reaction evidence="1">
        <text>(2R,3R)-2,3-dihydroxy-3-methylpentanoate + NADP(+) = (S)-2-ethyl-2-hydroxy-3-oxobutanoate + NADPH + H(+)</text>
        <dbReference type="Rhea" id="RHEA:13493"/>
        <dbReference type="ChEBI" id="CHEBI:15378"/>
        <dbReference type="ChEBI" id="CHEBI:49256"/>
        <dbReference type="ChEBI" id="CHEBI:49258"/>
        <dbReference type="ChEBI" id="CHEBI:57783"/>
        <dbReference type="ChEBI" id="CHEBI:58349"/>
        <dbReference type="EC" id="1.1.1.86"/>
    </reaction>
</comment>
<comment type="cofactor">
    <cofactor evidence="1">
        <name>Mg(2+)</name>
        <dbReference type="ChEBI" id="CHEBI:18420"/>
    </cofactor>
    <text evidence="1">Binds 2 magnesium ions per subunit.</text>
</comment>
<comment type="pathway">
    <text evidence="1">Amino-acid biosynthesis; L-isoleucine biosynthesis; L-isoleucine from 2-oxobutanoate: step 2/4.</text>
</comment>
<comment type="pathway">
    <text evidence="1">Amino-acid biosynthesis; L-valine biosynthesis; L-valine from pyruvate: step 2/4.</text>
</comment>
<comment type="similarity">
    <text evidence="1">Belongs to the ketol-acid reductoisomerase family.</text>
</comment>
<feature type="chain" id="PRO_1000050489" description="Ketol-acid reductoisomerase (NADP(+))">
    <location>
        <begin position="1"/>
        <end position="338"/>
    </location>
</feature>
<feature type="domain" description="KARI N-terminal Rossmann" evidence="2">
    <location>
        <begin position="1"/>
        <end position="181"/>
    </location>
</feature>
<feature type="domain" description="KARI C-terminal knotted" evidence="3">
    <location>
        <begin position="182"/>
        <end position="327"/>
    </location>
</feature>
<feature type="active site" evidence="1">
    <location>
        <position position="107"/>
    </location>
</feature>
<feature type="binding site" evidence="1">
    <location>
        <begin position="24"/>
        <end position="27"/>
    </location>
    <ligand>
        <name>NADP(+)</name>
        <dbReference type="ChEBI" id="CHEBI:58349"/>
    </ligand>
</feature>
<feature type="binding site" evidence="1">
    <location>
        <position position="47"/>
    </location>
    <ligand>
        <name>NADP(+)</name>
        <dbReference type="ChEBI" id="CHEBI:58349"/>
    </ligand>
</feature>
<feature type="binding site" evidence="1">
    <location>
        <position position="52"/>
    </location>
    <ligand>
        <name>NADP(+)</name>
        <dbReference type="ChEBI" id="CHEBI:58349"/>
    </ligand>
</feature>
<feature type="binding site" evidence="1">
    <location>
        <position position="133"/>
    </location>
    <ligand>
        <name>NADP(+)</name>
        <dbReference type="ChEBI" id="CHEBI:58349"/>
    </ligand>
</feature>
<feature type="binding site" evidence="1">
    <location>
        <position position="190"/>
    </location>
    <ligand>
        <name>Mg(2+)</name>
        <dbReference type="ChEBI" id="CHEBI:18420"/>
        <label>1</label>
    </ligand>
</feature>
<feature type="binding site" evidence="1">
    <location>
        <position position="190"/>
    </location>
    <ligand>
        <name>Mg(2+)</name>
        <dbReference type="ChEBI" id="CHEBI:18420"/>
        <label>2</label>
    </ligand>
</feature>
<feature type="binding site" evidence="1">
    <location>
        <position position="194"/>
    </location>
    <ligand>
        <name>Mg(2+)</name>
        <dbReference type="ChEBI" id="CHEBI:18420"/>
        <label>1</label>
    </ligand>
</feature>
<feature type="binding site" evidence="1">
    <location>
        <position position="226"/>
    </location>
    <ligand>
        <name>Mg(2+)</name>
        <dbReference type="ChEBI" id="CHEBI:18420"/>
        <label>2</label>
    </ligand>
</feature>
<feature type="binding site" evidence="1">
    <location>
        <position position="230"/>
    </location>
    <ligand>
        <name>Mg(2+)</name>
        <dbReference type="ChEBI" id="CHEBI:18420"/>
        <label>2</label>
    </ligand>
</feature>
<feature type="binding site" evidence="1">
    <location>
        <position position="251"/>
    </location>
    <ligand>
        <name>substrate</name>
    </ligand>
</feature>